<reference key="1">
    <citation type="journal article" date="2009" name="PLoS ONE">
        <title>The complete genome of Teredinibacter turnerae T7901: an intracellular endosymbiont of marine wood-boring bivalves (shipworms).</title>
        <authorList>
            <person name="Yang J.C."/>
            <person name="Madupu R."/>
            <person name="Durkin A.S."/>
            <person name="Ekborg N.A."/>
            <person name="Pedamallu C.S."/>
            <person name="Hostetler J.B."/>
            <person name="Radune D."/>
            <person name="Toms B.S."/>
            <person name="Henrissat B."/>
            <person name="Coutinho P.M."/>
            <person name="Schwarz S."/>
            <person name="Field L."/>
            <person name="Trindade-Silva A.E."/>
            <person name="Soares C.A.G."/>
            <person name="Elshahawi S."/>
            <person name="Hanora A."/>
            <person name="Schmidt E.W."/>
            <person name="Haygood M.G."/>
            <person name="Posfai J."/>
            <person name="Benner J."/>
            <person name="Madinger C."/>
            <person name="Nove J."/>
            <person name="Anton B."/>
            <person name="Chaudhary K."/>
            <person name="Foster J."/>
            <person name="Holman A."/>
            <person name="Kumar S."/>
            <person name="Lessard P.A."/>
            <person name="Luyten Y.A."/>
            <person name="Slatko B."/>
            <person name="Wood N."/>
            <person name="Wu B."/>
            <person name="Teplitski M."/>
            <person name="Mougous J.D."/>
            <person name="Ward N."/>
            <person name="Eisen J.A."/>
            <person name="Badger J.H."/>
            <person name="Distel D.L."/>
        </authorList>
    </citation>
    <scope>NUCLEOTIDE SEQUENCE [LARGE SCALE GENOMIC DNA]</scope>
    <source>
        <strain>ATCC 39867 / T7901</strain>
    </source>
</reference>
<protein>
    <recommendedName>
        <fullName evidence="1">Holliday junction branch migration complex subunit RuvB</fullName>
        <ecNumber evidence="1">3.6.4.-</ecNumber>
    </recommendedName>
</protein>
<feature type="chain" id="PRO_1000201848" description="Holliday junction branch migration complex subunit RuvB">
    <location>
        <begin position="1"/>
        <end position="347"/>
    </location>
</feature>
<feature type="region of interest" description="Large ATPase domain (RuvB-L)" evidence="1">
    <location>
        <begin position="4"/>
        <end position="184"/>
    </location>
</feature>
<feature type="region of interest" description="Small ATPAse domain (RuvB-S)" evidence="1">
    <location>
        <begin position="185"/>
        <end position="255"/>
    </location>
</feature>
<feature type="region of interest" description="Head domain (RuvB-H)" evidence="1">
    <location>
        <begin position="258"/>
        <end position="347"/>
    </location>
</feature>
<feature type="binding site" evidence="1">
    <location>
        <position position="24"/>
    </location>
    <ligand>
        <name>ATP</name>
        <dbReference type="ChEBI" id="CHEBI:30616"/>
    </ligand>
</feature>
<feature type="binding site" evidence="1">
    <location>
        <position position="65"/>
    </location>
    <ligand>
        <name>ATP</name>
        <dbReference type="ChEBI" id="CHEBI:30616"/>
    </ligand>
</feature>
<feature type="binding site" evidence="1">
    <location>
        <position position="68"/>
    </location>
    <ligand>
        <name>ATP</name>
        <dbReference type="ChEBI" id="CHEBI:30616"/>
    </ligand>
</feature>
<feature type="binding site" evidence="1">
    <location>
        <position position="69"/>
    </location>
    <ligand>
        <name>ATP</name>
        <dbReference type="ChEBI" id="CHEBI:30616"/>
    </ligand>
</feature>
<feature type="binding site" evidence="1">
    <location>
        <position position="69"/>
    </location>
    <ligand>
        <name>Mg(2+)</name>
        <dbReference type="ChEBI" id="CHEBI:18420"/>
    </ligand>
</feature>
<feature type="binding site" evidence="1">
    <location>
        <position position="70"/>
    </location>
    <ligand>
        <name>ATP</name>
        <dbReference type="ChEBI" id="CHEBI:30616"/>
    </ligand>
</feature>
<feature type="binding site" evidence="1">
    <location>
        <begin position="131"/>
        <end position="133"/>
    </location>
    <ligand>
        <name>ATP</name>
        <dbReference type="ChEBI" id="CHEBI:30616"/>
    </ligand>
</feature>
<feature type="binding site" evidence="1">
    <location>
        <position position="174"/>
    </location>
    <ligand>
        <name>ATP</name>
        <dbReference type="ChEBI" id="CHEBI:30616"/>
    </ligand>
</feature>
<feature type="binding site" evidence="1">
    <location>
        <position position="184"/>
    </location>
    <ligand>
        <name>ATP</name>
        <dbReference type="ChEBI" id="CHEBI:30616"/>
    </ligand>
</feature>
<feature type="binding site" evidence="1">
    <location>
        <position position="221"/>
    </location>
    <ligand>
        <name>ATP</name>
        <dbReference type="ChEBI" id="CHEBI:30616"/>
    </ligand>
</feature>
<feature type="binding site" evidence="1">
    <location>
        <position position="294"/>
    </location>
    <ligand>
        <name>DNA</name>
        <dbReference type="ChEBI" id="CHEBI:16991"/>
    </ligand>
</feature>
<feature type="binding site" evidence="1">
    <location>
        <position position="313"/>
    </location>
    <ligand>
        <name>DNA</name>
        <dbReference type="ChEBI" id="CHEBI:16991"/>
    </ligand>
</feature>
<feature type="binding site" evidence="1">
    <location>
        <position position="318"/>
    </location>
    <ligand>
        <name>DNA</name>
        <dbReference type="ChEBI" id="CHEBI:16991"/>
    </ligand>
</feature>
<comment type="function">
    <text evidence="1">The RuvA-RuvB-RuvC complex processes Holliday junction (HJ) DNA during genetic recombination and DNA repair, while the RuvA-RuvB complex plays an important role in the rescue of blocked DNA replication forks via replication fork reversal (RFR). RuvA specifically binds to HJ cruciform DNA, conferring on it an open structure. The RuvB hexamer acts as an ATP-dependent pump, pulling dsDNA into and through the RuvAB complex. RuvB forms 2 homohexamers on either side of HJ DNA bound by 1 or 2 RuvA tetramers; 4 subunits per hexamer contact DNA at a time. Coordinated motions by a converter formed by DNA-disengaged RuvB subunits stimulates ATP hydrolysis and nucleotide exchange. Immobilization of the converter enables RuvB to convert the ATP-contained energy into a lever motion, pulling 2 nucleotides of DNA out of the RuvA tetramer per ATP hydrolyzed, thus driving DNA branch migration. The RuvB motors rotate together with the DNA substrate, which together with the progressing nucleotide cycle form the mechanistic basis for DNA recombination by continuous HJ branch migration. Branch migration allows RuvC to scan DNA until it finds its consensus sequence, where it cleaves and resolves cruciform DNA.</text>
</comment>
<comment type="catalytic activity">
    <reaction evidence="1">
        <text>ATP + H2O = ADP + phosphate + H(+)</text>
        <dbReference type="Rhea" id="RHEA:13065"/>
        <dbReference type="ChEBI" id="CHEBI:15377"/>
        <dbReference type="ChEBI" id="CHEBI:15378"/>
        <dbReference type="ChEBI" id="CHEBI:30616"/>
        <dbReference type="ChEBI" id="CHEBI:43474"/>
        <dbReference type="ChEBI" id="CHEBI:456216"/>
    </reaction>
</comment>
<comment type="subunit">
    <text evidence="1">Homohexamer. Forms an RuvA(8)-RuvB(12)-Holliday junction (HJ) complex. HJ DNA is sandwiched between 2 RuvA tetramers; dsDNA enters through RuvA and exits via RuvB. An RuvB hexamer assembles on each DNA strand where it exits the tetramer. Each RuvB hexamer is contacted by two RuvA subunits (via domain III) on 2 adjacent RuvB subunits; this complex drives branch migration. In the full resolvosome a probable DNA-RuvA(4)-RuvB(12)-RuvC(2) complex forms which resolves the HJ.</text>
</comment>
<comment type="subcellular location">
    <subcellularLocation>
        <location evidence="1">Cytoplasm</location>
    </subcellularLocation>
</comment>
<comment type="domain">
    <text evidence="1">Has 3 domains, the large (RuvB-L) and small ATPase (RuvB-S) domains and the C-terminal head (RuvB-H) domain. The head domain binds DNA, while the ATPase domains jointly bind ATP, ADP or are empty depending on the state of the subunit in the translocation cycle. During a single DNA translocation step the structure of each domain remains the same, but their relative positions change.</text>
</comment>
<comment type="similarity">
    <text evidence="1">Belongs to the RuvB family.</text>
</comment>
<gene>
    <name evidence="1" type="primary">ruvB</name>
    <name type="ordered locus">TERTU_3434</name>
</gene>
<sequence length="347" mass="37969">MIDQDRIVDGHASGREDQLDRAVRPKRLAEYIGQPAVREQMEIFIGAARLREEALDHTLVFGPPGLGKTTLANIIATEMGGDLKTTSGPVLDKAGDLAALMTNLEAGDVLFIDEIHRLSPVVEEILYPAMEDFQLDIMIGDGPAARSIKLDLPPFTLVGATTRAGLLTSPLRDRFGIVQRLEFYSVQDLTHIVKRSAQLSGVAMEEAGGMEIARRARGTPRIANRLLRRVRDYAEVKGDGVITAAIADSALNMLNVDHHGFDHMDRRLLLALIEKFGGGPVGVDSLAAAISEERDTIEDVLEPYLIQQGFLVRTPRGRMATQNAYNHFGILAPKHLESQQQDSLPGI</sequence>
<organism>
    <name type="scientific">Teredinibacter turnerae (strain ATCC 39867 / T7901)</name>
    <dbReference type="NCBI Taxonomy" id="377629"/>
    <lineage>
        <taxon>Bacteria</taxon>
        <taxon>Pseudomonadati</taxon>
        <taxon>Pseudomonadota</taxon>
        <taxon>Gammaproteobacteria</taxon>
        <taxon>Cellvibrionales</taxon>
        <taxon>Cellvibrionaceae</taxon>
        <taxon>Teredinibacter</taxon>
    </lineage>
</organism>
<dbReference type="EC" id="3.6.4.-" evidence="1"/>
<dbReference type="EMBL" id="CP001614">
    <property type="protein sequence ID" value="ACR11192.1"/>
    <property type="molecule type" value="Genomic_DNA"/>
</dbReference>
<dbReference type="RefSeq" id="WP_015817304.1">
    <property type="nucleotide sequence ID" value="NC_012997.1"/>
</dbReference>
<dbReference type="SMR" id="C5BQT4"/>
<dbReference type="STRING" id="377629.TERTU_3434"/>
<dbReference type="GeneID" id="58410797"/>
<dbReference type="KEGG" id="ttu:TERTU_3434"/>
<dbReference type="eggNOG" id="COG2255">
    <property type="taxonomic scope" value="Bacteria"/>
</dbReference>
<dbReference type="HOGENOM" id="CLU_055599_1_0_6"/>
<dbReference type="OrthoDB" id="9804478at2"/>
<dbReference type="Proteomes" id="UP000009080">
    <property type="component" value="Chromosome"/>
</dbReference>
<dbReference type="GO" id="GO:0005737">
    <property type="term" value="C:cytoplasm"/>
    <property type="evidence" value="ECO:0007669"/>
    <property type="project" value="UniProtKB-SubCell"/>
</dbReference>
<dbReference type="GO" id="GO:0048476">
    <property type="term" value="C:Holliday junction resolvase complex"/>
    <property type="evidence" value="ECO:0007669"/>
    <property type="project" value="UniProtKB-UniRule"/>
</dbReference>
<dbReference type="GO" id="GO:0005524">
    <property type="term" value="F:ATP binding"/>
    <property type="evidence" value="ECO:0007669"/>
    <property type="project" value="UniProtKB-UniRule"/>
</dbReference>
<dbReference type="GO" id="GO:0016887">
    <property type="term" value="F:ATP hydrolysis activity"/>
    <property type="evidence" value="ECO:0007669"/>
    <property type="project" value="InterPro"/>
</dbReference>
<dbReference type="GO" id="GO:0000400">
    <property type="term" value="F:four-way junction DNA binding"/>
    <property type="evidence" value="ECO:0007669"/>
    <property type="project" value="UniProtKB-UniRule"/>
</dbReference>
<dbReference type="GO" id="GO:0009378">
    <property type="term" value="F:four-way junction helicase activity"/>
    <property type="evidence" value="ECO:0007669"/>
    <property type="project" value="InterPro"/>
</dbReference>
<dbReference type="GO" id="GO:0006310">
    <property type="term" value="P:DNA recombination"/>
    <property type="evidence" value="ECO:0007669"/>
    <property type="project" value="UniProtKB-UniRule"/>
</dbReference>
<dbReference type="GO" id="GO:0006281">
    <property type="term" value="P:DNA repair"/>
    <property type="evidence" value="ECO:0007669"/>
    <property type="project" value="UniProtKB-UniRule"/>
</dbReference>
<dbReference type="CDD" id="cd00009">
    <property type="entry name" value="AAA"/>
    <property type="match status" value="1"/>
</dbReference>
<dbReference type="FunFam" id="1.10.10.10:FF:000086">
    <property type="entry name" value="Holliday junction ATP-dependent DNA helicase RuvB"/>
    <property type="match status" value="1"/>
</dbReference>
<dbReference type="FunFam" id="1.10.8.60:FF:000023">
    <property type="entry name" value="Holliday junction ATP-dependent DNA helicase RuvB"/>
    <property type="match status" value="1"/>
</dbReference>
<dbReference type="FunFam" id="3.40.50.300:FF:000073">
    <property type="entry name" value="Holliday junction ATP-dependent DNA helicase RuvB"/>
    <property type="match status" value="1"/>
</dbReference>
<dbReference type="Gene3D" id="1.10.8.60">
    <property type="match status" value="1"/>
</dbReference>
<dbReference type="Gene3D" id="3.40.50.300">
    <property type="entry name" value="P-loop containing nucleotide triphosphate hydrolases"/>
    <property type="match status" value="1"/>
</dbReference>
<dbReference type="Gene3D" id="1.10.10.10">
    <property type="entry name" value="Winged helix-like DNA-binding domain superfamily/Winged helix DNA-binding domain"/>
    <property type="match status" value="1"/>
</dbReference>
<dbReference type="HAMAP" id="MF_00016">
    <property type="entry name" value="DNA_HJ_migration_RuvB"/>
    <property type="match status" value="1"/>
</dbReference>
<dbReference type="InterPro" id="IPR003593">
    <property type="entry name" value="AAA+_ATPase"/>
</dbReference>
<dbReference type="InterPro" id="IPR041445">
    <property type="entry name" value="AAA_lid_4"/>
</dbReference>
<dbReference type="InterPro" id="IPR004605">
    <property type="entry name" value="DNA_helicase_Holl-junc_RuvB"/>
</dbReference>
<dbReference type="InterPro" id="IPR027417">
    <property type="entry name" value="P-loop_NTPase"/>
</dbReference>
<dbReference type="InterPro" id="IPR008824">
    <property type="entry name" value="RuvB-like_N"/>
</dbReference>
<dbReference type="InterPro" id="IPR008823">
    <property type="entry name" value="RuvB_C"/>
</dbReference>
<dbReference type="InterPro" id="IPR036388">
    <property type="entry name" value="WH-like_DNA-bd_sf"/>
</dbReference>
<dbReference type="InterPro" id="IPR036390">
    <property type="entry name" value="WH_DNA-bd_sf"/>
</dbReference>
<dbReference type="NCBIfam" id="NF000868">
    <property type="entry name" value="PRK00080.1"/>
    <property type="match status" value="1"/>
</dbReference>
<dbReference type="NCBIfam" id="TIGR00635">
    <property type="entry name" value="ruvB"/>
    <property type="match status" value="1"/>
</dbReference>
<dbReference type="PANTHER" id="PTHR42848">
    <property type="match status" value="1"/>
</dbReference>
<dbReference type="PANTHER" id="PTHR42848:SF1">
    <property type="entry name" value="HOLLIDAY JUNCTION BRANCH MIGRATION COMPLEX SUBUNIT RUVB"/>
    <property type="match status" value="1"/>
</dbReference>
<dbReference type="Pfam" id="PF17864">
    <property type="entry name" value="AAA_lid_4"/>
    <property type="match status" value="1"/>
</dbReference>
<dbReference type="Pfam" id="PF05491">
    <property type="entry name" value="RuvB_C"/>
    <property type="match status" value="1"/>
</dbReference>
<dbReference type="Pfam" id="PF05496">
    <property type="entry name" value="RuvB_N"/>
    <property type="match status" value="1"/>
</dbReference>
<dbReference type="SMART" id="SM00382">
    <property type="entry name" value="AAA"/>
    <property type="match status" value="1"/>
</dbReference>
<dbReference type="SUPFAM" id="SSF52540">
    <property type="entry name" value="P-loop containing nucleoside triphosphate hydrolases"/>
    <property type="match status" value="1"/>
</dbReference>
<dbReference type="SUPFAM" id="SSF46785">
    <property type="entry name" value="Winged helix' DNA-binding domain"/>
    <property type="match status" value="1"/>
</dbReference>
<keyword id="KW-0067">ATP-binding</keyword>
<keyword id="KW-0963">Cytoplasm</keyword>
<keyword id="KW-0227">DNA damage</keyword>
<keyword id="KW-0233">DNA recombination</keyword>
<keyword id="KW-0234">DNA repair</keyword>
<keyword id="KW-0238">DNA-binding</keyword>
<keyword id="KW-0378">Hydrolase</keyword>
<keyword id="KW-0547">Nucleotide-binding</keyword>
<keyword id="KW-1185">Reference proteome</keyword>
<evidence type="ECO:0000255" key="1">
    <source>
        <dbReference type="HAMAP-Rule" id="MF_00016"/>
    </source>
</evidence>
<accession>C5BQT4</accession>
<name>RUVB_TERTT</name>
<proteinExistence type="inferred from homology"/>